<organism>
    <name type="scientific">Streptococcus pneumoniae serotype 2 (strain D39 / NCTC 7466)</name>
    <dbReference type="NCBI Taxonomy" id="373153"/>
    <lineage>
        <taxon>Bacteria</taxon>
        <taxon>Bacillati</taxon>
        <taxon>Bacillota</taxon>
        <taxon>Bacilli</taxon>
        <taxon>Lactobacillales</taxon>
        <taxon>Streptococcaceae</taxon>
        <taxon>Streptococcus</taxon>
    </lineage>
</organism>
<accession>Q04KY1</accession>
<sequence>MANPKYKRILIKLSGEALAGERGVGIDIQTVQTIAKEIQEVHSLGIEIALVIGGGNLWRGEPAAEAGMDRVQADYTGMLGTVMNALVMADSLQQVGVDTRVQTAIAMQQVAEPYVRGRALRHLEKGRIVIFGAGIGSPYFSTDTTAALRAAEIEADAILMAKNGVDGVYNADPKKDKTAVKFEELTHRDVINKGLRIMDSTASTLSMDNDIDLVVFNMNQSGNIKRVVFGENIGTTVSNNIEEKE</sequence>
<feature type="chain" id="PRO_1000054031" description="Uridylate kinase">
    <location>
        <begin position="1"/>
        <end position="245"/>
    </location>
</feature>
<feature type="region of interest" description="Involved in allosteric activation by GTP" evidence="1">
    <location>
        <begin position="20"/>
        <end position="25"/>
    </location>
</feature>
<feature type="binding site" evidence="1">
    <location>
        <begin position="12"/>
        <end position="15"/>
    </location>
    <ligand>
        <name>ATP</name>
        <dbReference type="ChEBI" id="CHEBI:30616"/>
    </ligand>
</feature>
<feature type="binding site" evidence="1">
    <location>
        <position position="54"/>
    </location>
    <ligand>
        <name>UMP</name>
        <dbReference type="ChEBI" id="CHEBI:57865"/>
    </ligand>
</feature>
<feature type="binding site" evidence="1">
    <location>
        <position position="55"/>
    </location>
    <ligand>
        <name>ATP</name>
        <dbReference type="ChEBI" id="CHEBI:30616"/>
    </ligand>
</feature>
<feature type="binding site" evidence="1">
    <location>
        <position position="59"/>
    </location>
    <ligand>
        <name>ATP</name>
        <dbReference type="ChEBI" id="CHEBI:30616"/>
    </ligand>
</feature>
<feature type="binding site" evidence="1">
    <location>
        <position position="74"/>
    </location>
    <ligand>
        <name>UMP</name>
        <dbReference type="ChEBI" id="CHEBI:57865"/>
    </ligand>
</feature>
<feature type="binding site" evidence="1">
    <location>
        <begin position="135"/>
        <end position="142"/>
    </location>
    <ligand>
        <name>UMP</name>
        <dbReference type="ChEBI" id="CHEBI:57865"/>
    </ligand>
</feature>
<feature type="binding site" evidence="1">
    <location>
        <position position="163"/>
    </location>
    <ligand>
        <name>ATP</name>
        <dbReference type="ChEBI" id="CHEBI:30616"/>
    </ligand>
</feature>
<feature type="binding site" evidence="1">
    <location>
        <position position="169"/>
    </location>
    <ligand>
        <name>ATP</name>
        <dbReference type="ChEBI" id="CHEBI:30616"/>
    </ligand>
</feature>
<feature type="binding site" evidence="1">
    <location>
        <position position="172"/>
    </location>
    <ligand>
        <name>ATP</name>
        <dbReference type="ChEBI" id="CHEBI:30616"/>
    </ligand>
</feature>
<protein>
    <recommendedName>
        <fullName evidence="1">Uridylate kinase</fullName>
        <shortName evidence="1">UK</shortName>
        <ecNumber evidence="1">2.7.4.22</ecNumber>
    </recommendedName>
    <alternativeName>
        <fullName evidence="1">Uridine monophosphate kinase</fullName>
        <shortName evidence="1">UMP kinase</shortName>
        <shortName evidence="1">UMPK</shortName>
    </alternativeName>
</protein>
<reference key="1">
    <citation type="journal article" date="2007" name="J. Bacteriol.">
        <title>Genome sequence of Avery's virulent serotype 2 strain D39 of Streptococcus pneumoniae and comparison with that of unencapsulated laboratory strain R6.</title>
        <authorList>
            <person name="Lanie J.A."/>
            <person name="Ng W.-L."/>
            <person name="Kazmierczak K.M."/>
            <person name="Andrzejewski T.M."/>
            <person name="Davidsen T.M."/>
            <person name="Wayne K.J."/>
            <person name="Tettelin H."/>
            <person name="Glass J.I."/>
            <person name="Winkler M.E."/>
        </authorList>
    </citation>
    <scope>NUCLEOTIDE SEQUENCE [LARGE SCALE GENOMIC DNA]</scope>
    <source>
        <strain>D39 / NCTC 7466</strain>
    </source>
</reference>
<gene>
    <name evidence="1" type="primary">pyrH</name>
    <name type="ordered locus">SPD_0834</name>
</gene>
<dbReference type="EC" id="2.7.4.22" evidence="1"/>
<dbReference type="EMBL" id="CP000410">
    <property type="protein sequence ID" value="ABJ53606.1"/>
    <property type="molecule type" value="Genomic_DNA"/>
</dbReference>
<dbReference type="RefSeq" id="WP_000002997.1">
    <property type="nucleotide sequence ID" value="NZ_JAMLJR010000004.1"/>
</dbReference>
<dbReference type="SMR" id="Q04KY1"/>
<dbReference type="PaxDb" id="373153-SPD_0834"/>
<dbReference type="GeneID" id="93739789"/>
<dbReference type="KEGG" id="spd:SPD_0834"/>
<dbReference type="eggNOG" id="COG0528">
    <property type="taxonomic scope" value="Bacteria"/>
</dbReference>
<dbReference type="HOGENOM" id="CLU_033861_0_0_9"/>
<dbReference type="BioCyc" id="SPNE373153:G1G6V-913-MONOMER"/>
<dbReference type="UniPathway" id="UPA00159">
    <property type="reaction ID" value="UER00275"/>
</dbReference>
<dbReference type="Proteomes" id="UP000001452">
    <property type="component" value="Chromosome"/>
</dbReference>
<dbReference type="GO" id="GO:0005737">
    <property type="term" value="C:cytoplasm"/>
    <property type="evidence" value="ECO:0007669"/>
    <property type="project" value="UniProtKB-SubCell"/>
</dbReference>
<dbReference type="GO" id="GO:0005524">
    <property type="term" value="F:ATP binding"/>
    <property type="evidence" value="ECO:0007669"/>
    <property type="project" value="UniProtKB-KW"/>
</dbReference>
<dbReference type="GO" id="GO:0033862">
    <property type="term" value="F:UMP kinase activity"/>
    <property type="evidence" value="ECO:0007669"/>
    <property type="project" value="UniProtKB-EC"/>
</dbReference>
<dbReference type="GO" id="GO:0044210">
    <property type="term" value="P:'de novo' CTP biosynthetic process"/>
    <property type="evidence" value="ECO:0007669"/>
    <property type="project" value="UniProtKB-UniRule"/>
</dbReference>
<dbReference type="GO" id="GO:0006225">
    <property type="term" value="P:UDP biosynthetic process"/>
    <property type="evidence" value="ECO:0007669"/>
    <property type="project" value="TreeGrafter"/>
</dbReference>
<dbReference type="CDD" id="cd04254">
    <property type="entry name" value="AAK_UMPK-PyrH-Ec"/>
    <property type="match status" value="1"/>
</dbReference>
<dbReference type="FunFam" id="3.40.1160.10:FF:000019">
    <property type="entry name" value="Uridylate kinase"/>
    <property type="match status" value="1"/>
</dbReference>
<dbReference type="Gene3D" id="3.40.1160.10">
    <property type="entry name" value="Acetylglutamate kinase-like"/>
    <property type="match status" value="1"/>
</dbReference>
<dbReference type="HAMAP" id="MF_01220_B">
    <property type="entry name" value="PyrH_B"/>
    <property type="match status" value="1"/>
</dbReference>
<dbReference type="InterPro" id="IPR036393">
    <property type="entry name" value="AceGlu_kinase-like_sf"/>
</dbReference>
<dbReference type="InterPro" id="IPR001048">
    <property type="entry name" value="Asp/Glu/Uridylate_kinase"/>
</dbReference>
<dbReference type="InterPro" id="IPR011817">
    <property type="entry name" value="Uridylate_kinase"/>
</dbReference>
<dbReference type="InterPro" id="IPR015963">
    <property type="entry name" value="Uridylate_kinase_bac"/>
</dbReference>
<dbReference type="NCBIfam" id="TIGR02075">
    <property type="entry name" value="pyrH_bact"/>
    <property type="match status" value="1"/>
</dbReference>
<dbReference type="PANTHER" id="PTHR42833">
    <property type="entry name" value="URIDYLATE KINASE"/>
    <property type="match status" value="1"/>
</dbReference>
<dbReference type="PANTHER" id="PTHR42833:SF4">
    <property type="entry name" value="URIDYLATE KINASE PUMPKIN, CHLOROPLASTIC"/>
    <property type="match status" value="1"/>
</dbReference>
<dbReference type="Pfam" id="PF00696">
    <property type="entry name" value="AA_kinase"/>
    <property type="match status" value="1"/>
</dbReference>
<dbReference type="PIRSF" id="PIRSF005650">
    <property type="entry name" value="Uridylate_kin"/>
    <property type="match status" value="1"/>
</dbReference>
<dbReference type="SUPFAM" id="SSF53633">
    <property type="entry name" value="Carbamate kinase-like"/>
    <property type="match status" value="1"/>
</dbReference>
<proteinExistence type="inferred from homology"/>
<keyword id="KW-0021">Allosteric enzyme</keyword>
<keyword id="KW-0067">ATP-binding</keyword>
<keyword id="KW-0963">Cytoplasm</keyword>
<keyword id="KW-0418">Kinase</keyword>
<keyword id="KW-0547">Nucleotide-binding</keyword>
<keyword id="KW-0665">Pyrimidine biosynthesis</keyword>
<keyword id="KW-1185">Reference proteome</keyword>
<keyword id="KW-0808">Transferase</keyword>
<name>PYRH_STRP2</name>
<comment type="function">
    <text evidence="1">Catalyzes the reversible phosphorylation of UMP to UDP.</text>
</comment>
<comment type="catalytic activity">
    <reaction evidence="1">
        <text>UMP + ATP = UDP + ADP</text>
        <dbReference type="Rhea" id="RHEA:24400"/>
        <dbReference type="ChEBI" id="CHEBI:30616"/>
        <dbReference type="ChEBI" id="CHEBI:57865"/>
        <dbReference type="ChEBI" id="CHEBI:58223"/>
        <dbReference type="ChEBI" id="CHEBI:456216"/>
        <dbReference type="EC" id="2.7.4.22"/>
    </reaction>
</comment>
<comment type="activity regulation">
    <text evidence="1">Allosterically activated by GTP. Inhibited by UTP.</text>
</comment>
<comment type="pathway">
    <text evidence="1">Pyrimidine metabolism; CTP biosynthesis via de novo pathway; UDP from UMP (UMPK route): step 1/1.</text>
</comment>
<comment type="subunit">
    <text evidence="1">Homohexamer.</text>
</comment>
<comment type="subcellular location">
    <subcellularLocation>
        <location evidence="1">Cytoplasm</location>
    </subcellularLocation>
</comment>
<comment type="similarity">
    <text evidence="1">Belongs to the UMP kinase family.</text>
</comment>
<evidence type="ECO:0000255" key="1">
    <source>
        <dbReference type="HAMAP-Rule" id="MF_01220"/>
    </source>
</evidence>